<evidence type="ECO:0000255" key="1">
    <source>
        <dbReference type="HAMAP-Rule" id="MF_01131"/>
    </source>
</evidence>
<accession>A6QIP3</accession>
<sequence>MSDQVKIPRATLKRLPLYYRFVSSLKSKGIDRVNSKAISDALQIDSATIRRDFSYFGELGKKGYGYNIDSLLDFFKSELSESDMIKIAIVGVGNLGKALLTYNFSIHDDMTITEAFDVKEDVIGQKIGNVIVKDNDELITTLKKEEIDVVILTTPERVAQKVADELVQAGVKGILNFTPGRINTPSDVQVHQIDLGIELQSLLFFMKNYSE</sequence>
<protein>
    <recommendedName>
        <fullName evidence="1">Redox-sensing transcriptional repressor Rex</fullName>
    </recommendedName>
</protein>
<comment type="function">
    <text evidence="1">Modulates transcription in response to changes in cellular NADH/NAD(+) redox state.</text>
</comment>
<comment type="subunit">
    <text evidence="1">Homodimer.</text>
</comment>
<comment type="subcellular location">
    <subcellularLocation>
        <location evidence="1">Cytoplasm</location>
    </subcellularLocation>
</comment>
<comment type="similarity">
    <text evidence="1">Belongs to the transcriptional regulatory Rex family.</text>
</comment>
<proteinExistence type="inferred from homology"/>
<reference key="1">
    <citation type="journal article" date="2008" name="J. Bacteriol.">
        <title>Genome sequence of Staphylococcus aureus strain Newman and comparative analysis of staphylococcal genomes: polymorphism and evolution of two major pathogenicity islands.</title>
        <authorList>
            <person name="Baba T."/>
            <person name="Bae T."/>
            <person name="Schneewind O."/>
            <person name="Takeuchi F."/>
            <person name="Hiramatsu K."/>
        </authorList>
    </citation>
    <scope>NUCLEOTIDE SEQUENCE [LARGE SCALE GENOMIC DNA]</scope>
    <source>
        <strain>Newman</strain>
    </source>
</reference>
<name>REX_STAAE</name>
<organism>
    <name type="scientific">Staphylococcus aureus (strain Newman)</name>
    <dbReference type="NCBI Taxonomy" id="426430"/>
    <lineage>
        <taxon>Bacteria</taxon>
        <taxon>Bacillati</taxon>
        <taxon>Bacillota</taxon>
        <taxon>Bacilli</taxon>
        <taxon>Bacillales</taxon>
        <taxon>Staphylococcaceae</taxon>
        <taxon>Staphylococcus</taxon>
    </lineage>
</organism>
<dbReference type="EMBL" id="AP009351">
    <property type="protein sequence ID" value="BAF68225.1"/>
    <property type="molecule type" value="Genomic_DNA"/>
</dbReference>
<dbReference type="RefSeq" id="WP_001283612.1">
    <property type="nucleotide sequence ID" value="NZ_JBBIAE010000015.1"/>
</dbReference>
<dbReference type="SMR" id="A6QIP3"/>
<dbReference type="KEGG" id="sae:NWMN_1953"/>
<dbReference type="HOGENOM" id="CLU_061534_1_1_9"/>
<dbReference type="Proteomes" id="UP000006386">
    <property type="component" value="Chromosome"/>
</dbReference>
<dbReference type="GO" id="GO:0005737">
    <property type="term" value="C:cytoplasm"/>
    <property type="evidence" value="ECO:0007669"/>
    <property type="project" value="UniProtKB-SubCell"/>
</dbReference>
<dbReference type="GO" id="GO:0003677">
    <property type="term" value="F:DNA binding"/>
    <property type="evidence" value="ECO:0007669"/>
    <property type="project" value="UniProtKB-UniRule"/>
</dbReference>
<dbReference type="GO" id="GO:0003700">
    <property type="term" value="F:DNA-binding transcription factor activity"/>
    <property type="evidence" value="ECO:0007669"/>
    <property type="project" value="UniProtKB-UniRule"/>
</dbReference>
<dbReference type="GO" id="GO:0045892">
    <property type="term" value="P:negative regulation of DNA-templated transcription"/>
    <property type="evidence" value="ECO:0007669"/>
    <property type="project" value="InterPro"/>
</dbReference>
<dbReference type="GO" id="GO:0051775">
    <property type="term" value="P:response to redox state"/>
    <property type="evidence" value="ECO:0007669"/>
    <property type="project" value="InterPro"/>
</dbReference>
<dbReference type="Gene3D" id="3.40.50.720">
    <property type="entry name" value="NAD(P)-binding Rossmann-like Domain"/>
    <property type="match status" value="1"/>
</dbReference>
<dbReference type="Gene3D" id="1.10.10.10">
    <property type="entry name" value="Winged helix-like DNA-binding domain superfamily/Winged helix DNA-binding domain"/>
    <property type="match status" value="1"/>
</dbReference>
<dbReference type="HAMAP" id="MF_01131">
    <property type="entry name" value="Rex"/>
    <property type="match status" value="1"/>
</dbReference>
<dbReference type="InterPro" id="IPR003781">
    <property type="entry name" value="CoA-bd"/>
</dbReference>
<dbReference type="InterPro" id="IPR036291">
    <property type="entry name" value="NAD(P)-bd_dom_sf"/>
</dbReference>
<dbReference type="InterPro" id="IPR009718">
    <property type="entry name" value="Rex_DNA-bd_C_dom"/>
</dbReference>
<dbReference type="InterPro" id="IPR022876">
    <property type="entry name" value="Tscrpt_rep_Rex"/>
</dbReference>
<dbReference type="InterPro" id="IPR036388">
    <property type="entry name" value="WH-like_DNA-bd_sf"/>
</dbReference>
<dbReference type="InterPro" id="IPR036390">
    <property type="entry name" value="WH_DNA-bd_sf"/>
</dbReference>
<dbReference type="NCBIfam" id="NF003989">
    <property type="entry name" value="PRK05472.1-3"/>
    <property type="match status" value="1"/>
</dbReference>
<dbReference type="NCBIfam" id="NF003991">
    <property type="entry name" value="PRK05472.1-5"/>
    <property type="match status" value="1"/>
</dbReference>
<dbReference type="NCBIfam" id="NF003994">
    <property type="entry name" value="PRK05472.2-3"/>
    <property type="match status" value="1"/>
</dbReference>
<dbReference type="NCBIfam" id="NF003995">
    <property type="entry name" value="PRK05472.2-4"/>
    <property type="match status" value="1"/>
</dbReference>
<dbReference type="NCBIfam" id="NF003996">
    <property type="entry name" value="PRK05472.2-5"/>
    <property type="match status" value="1"/>
</dbReference>
<dbReference type="PANTHER" id="PTHR35786">
    <property type="entry name" value="REDOX-SENSING TRANSCRIPTIONAL REPRESSOR REX"/>
    <property type="match status" value="1"/>
</dbReference>
<dbReference type="PANTHER" id="PTHR35786:SF1">
    <property type="entry name" value="REDOX-SENSING TRANSCRIPTIONAL REPRESSOR REX 1"/>
    <property type="match status" value="1"/>
</dbReference>
<dbReference type="Pfam" id="PF02629">
    <property type="entry name" value="CoA_binding"/>
    <property type="match status" value="1"/>
</dbReference>
<dbReference type="Pfam" id="PF06971">
    <property type="entry name" value="Put_DNA-bind_N"/>
    <property type="match status" value="1"/>
</dbReference>
<dbReference type="SMART" id="SM00881">
    <property type="entry name" value="CoA_binding"/>
    <property type="match status" value="1"/>
</dbReference>
<dbReference type="SUPFAM" id="SSF51735">
    <property type="entry name" value="NAD(P)-binding Rossmann-fold domains"/>
    <property type="match status" value="1"/>
</dbReference>
<dbReference type="SUPFAM" id="SSF46785">
    <property type="entry name" value="Winged helix' DNA-binding domain"/>
    <property type="match status" value="1"/>
</dbReference>
<keyword id="KW-0963">Cytoplasm</keyword>
<keyword id="KW-0238">DNA-binding</keyword>
<keyword id="KW-0520">NAD</keyword>
<keyword id="KW-0678">Repressor</keyword>
<keyword id="KW-0804">Transcription</keyword>
<keyword id="KW-0805">Transcription regulation</keyword>
<feature type="chain" id="PRO_1000073048" description="Redox-sensing transcriptional repressor Rex">
    <location>
        <begin position="1"/>
        <end position="211"/>
    </location>
</feature>
<feature type="DNA-binding region" description="H-T-H motif" evidence="1">
    <location>
        <begin position="17"/>
        <end position="56"/>
    </location>
</feature>
<feature type="binding site" evidence="1">
    <location>
        <begin position="91"/>
        <end position="96"/>
    </location>
    <ligand>
        <name>NAD(+)</name>
        <dbReference type="ChEBI" id="CHEBI:57540"/>
    </ligand>
</feature>
<gene>
    <name evidence="1" type="primary">rex</name>
    <name type="ordered locus">NWMN_1953</name>
</gene>